<accession>A3KQV2</accession>
<accession>Q5U3R7</accession>
<dbReference type="EMBL" id="BX936461">
    <property type="protein sequence ID" value="CAM56323.1"/>
    <property type="molecule type" value="Genomic_DNA"/>
</dbReference>
<dbReference type="EMBL" id="BC085420">
    <property type="protein sequence ID" value="AAH85420.1"/>
    <property type="molecule type" value="mRNA"/>
</dbReference>
<dbReference type="RefSeq" id="NP_001007428.2">
    <property type="nucleotide sequence ID" value="NM_001007427.2"/>
</dbReference>
<dbReference type="SMR" id="A3KQV2"/>
<dbReference type="FunCoup" id="A3KQV2">
    <property type="interactions" value="1197"/>
</dbReference>
<dbReference type="STRING" id="7955.ENSDARP00000115398"/>
<dbReference type="PaxDb" id="7955-ENSDARP00000115398"/>
<dbReference type="PeptideAtlas" id="A3KQV2"/>
<dbReference type="Ensembl" id="ENSDART00000004092">
    <property type="protein sequence ID" value="ENSDARP00000017102"/>
    <property type="gene ID" value="ENSDARG00000013659"/>
</dbReference>
<dbReference type="Ensembl" id="ENSDART00000147044">
    <property type="protein sequence ID" value="ENSDARP00000115398"/>
    <property type="gene ID" value="ENSDARG00000013659"/>
</dbReference>
<dbReference type="GeneID" id="492786"/>
<dbReference type="KEGG" id="dre:492786"/>
<dbReference type="AGR" id="ZFIN:ZDB-GENE-041114-137"/>
<dbReference type="CTD" id="148362"/>
<dbReference type="ZFIN" id="ZDB-GENE-041114-137">
    <property type="gene designation" value="brox"/>
</dbReference>
<dbReference type="eggNOG" id="ENOG502QQBR">
    <property type="taxonomic scope" value="Eukaryota"/>
</dbReference>
<dbReference type="HOGENOM" id="CLU_056561_0_0_1"/>
<dbReference type="InParanoid" id="A3KQV2"/>
<dbReference type="OMA" id="YNYCGEN"/>
<dbReference type="OrthoDB" id="10266451at2759"/>
<dbReference type="PhylomeDB" id="A3KQV2"/>
<dbReference type="TreeFam" id="TF314743"/>
<dbReference type="PRO" id="PR:A3KQV2"/>
<dbReference type="Proteomes" id="UP000000437">
    <property type="component" value="Chromosome 20"/>
</dbReference>
<dbReference type="Bgee" id="ENSDARG00000013659">
    <property type="expression patterns" value="Expressed in brain and 20 other cell types or tissues"/>
</dbReference>
<dbReference type="GO" id="GO:0016020">
    <property type="term" value="C:membrane"/>
    <property type="evidence" value="ECO:0007669"/>
    <property type="project" value="UniProtKB-SubCell"/>
</dbReference>
<dbReference type="CDD" id="cd09243">
    <property type="entry name" value="BRO1_Brox_like"/>
    <property type="match status" value="1"/>
</dbReference>
<dbReference type="Gene3D" id="1.25.40.280">
    <property type="entry name" value="alix/aip1 like domains"/>
    <property type="match status" value="1"/>
</dbReference>
<dbReference type="InterPro" id="IPR004328">
    <property type="entry name" value="BRO1_dom"/>
</dbReference>
<dbReference type="InterPro" id="IPR038499">
    <property type="entry name" value="BRO1_sf"/>
</dbReference>
<dbReference type="InterPro" id="IPR038898">
    <property type="entry name" value="BROX"/>
</dbReference>
<dbReference type="PANTHER" id="PTHR23032">
    <property type="entry name" value="BRO1 DOMAIN-CONTAINING PROTEIN BROX"/>
    <property type="match status" value="1"/>
</dbReference>
<dbReference type="PANTHER" id="PTHR23032:SF13">
    <property type="entry name" value="BRO1 DOMAIN-CONTAINING PROTEIN BROX"/>
    <property type="match status" value="1"/>
</dbReference>
<dbReference type="Pfam" id="PF03097">
    <property type="entry name" value="BRO1"/>
    <property type="match status" value="1"/>
</dbReference>
<dbReference type="SMART" id="SM01041">
    <property type="entry name" value="BRO1"/>
    <property type="match status" value="1"/>
</dbReference>
<dbReference type="PROSITE" id="PS51180">
    <property type="entry name" value="BRO1"/>
    <property type="match status" value="1"/>
</dbReference>
<sequence length="411" mass="46125">MTHWFHRNPLKATAPVSFNLYGVASSPAANKICNDLRTARARLLDMFTDATCSPDTLKKSSDEYFALLQGFILPLDGTTQENKLRFIQNFKWTDTLQGNIASAQQDAVFELVSMAFNVALWYTKFASRLAGKENITEEEAKDVHKSLKIAAGIFKTLKETHIPRLITPAEKGRDLEPRVIDTYIVQSQAEAQEVTIARAIELKHNASLIAALAFETANFYQKADHTLNTLDPECSSKWKKYLQLKQHFYMAYAHCYHGQTLLAGDKCGEAIRSLQEAEKCYSRAEVLCKEYRQMKGPGSTAKPSEQLFFKKLGAVIKNTLEKCQRENGFIYFHKVPAEAPALELKASYGLAEPTAFELPPLSAQCTPEVYATFDLTRGHKDDKAKAKPEEEIKPVKEPDLKPQKDTGCVVC</sequence>
<proteinExistence type="evidence at transcript level"/>
<evidence type="ECO:0000250" key="1"/>
<evidence type="ECO:0000255" key="2">
    <source>
        <dbReference type="PROSITE-ProRule" id="PRU00526"/>
    </source>
</evidence>
<evidence type="ECO:0000256" key="3">
    <source>
        <dbReference type="SAM" id="MobiDB-lite"/>
    </source>
</evidence>
<evidence type="ECO:0000305" key="4"/>
<comment type="subcellular location">
    <subcellularLocation>
        <location evidence="4">Membrane</location>
        <topology evidence="4">Lipid-anchor</topology>
    </subcellularLocation>
</comment>
<comment type="similarity">
    <text evidence="4">Belongs to the BROX family.</text>
</comment>
<keyword id="KW-0449">Lipoprotein</keyword>
<keyword id="KW-0472">Membrane</keyword>
<keyword id="KW-0488">Methylation</keyword>
<keyword id="KW-0636">Prenylation</keyword>
<keyword id="KW-1185">Reference proteome</keyword>
<reference key="1">
    <citation type="journal article" date="2013" name="Nature">
        <title>The zebrafish reference genome sequence and its relationship to the human genome.</title>
        <authorList>
            <person name="Howe K."/>
            <person name="Clark M.D."/>
            <person name="Torroja C.F."/>
            <person name="Torrance J."/>
            <person name="Berthelot C."/>
            <person name="Muffato M."/>
            <person name="Collins J.E."/>
            <person name="Humphray S."/>
            <person name="McLaren K."/>
            <person name="Matthews L."/>
            <person name="McLaren S."/>
            <person name="Sealy I."/>
            <person name="Caccamo M."/>
            <person name="Churcher C."/>
            <person name="Scott C."/>
            <person name="Barrett J.C."/>
            <person name="Koch R."/>
            <person name="Rauch G.J."/>
            <person name="White S."/>
            <person name="Chow W."/>
            <person name="Kilian B."/>
            <person name="Quintais L.T."/>
            <person name="Guerra-Assuncao J.A."/>
            <person name="Zhou Y."/>
            <person name="Gu Y."/>
            <person name="Yen J."/>
            <person name="Vogel J.H."/>
            <person name="Eyre T."/>
            <person name="Redmond S."/>
            <person name="Banerjee R."/>
            <person name="Chi J."/>
            <person name="Fu B."/>
            <person name="Langley E."/>
            <person name="Maguire S.F."/>
            <person name="Laird G.K."/>
            <person name="Lloyd D."/>
            <person name="Kenyon E."/>
            <person name="Donaldson S."/>
            <person name="Sehra H."/>
            <person name="Almeida-King J."/>
            <person name="Loveland J."/>
            <person name="Trevanion S."/>
            <person name="Jones M."/>
            <person name="Quail M."/>
            <person name="Willey D."/>
            <person name="Hunt A."/>
            <person name="Burton J."/>
            <person name="Sims S."/>
            <person name="McLay K."/>
            <person name="Plumb B."/>
            <person name="Davis J."/>
            <person name="Clee C."/>
            <person name="Oliver K."/>
            <person name="Clark R."/>
            <person name="Riddle C."/>
            <person name="Elliot D."/>
            <person name="Threadgold G."/>
            <person name="Harden G."/>
            <person name="Ware D."/>
            <person name="Begum S."/>
            <person name="Mortimore B."/>
            <person name="Kerry G."/>
            <person name="Heath P."/>
            <person name="Phillimore B."/>
            <person name="Tracey A."/>
            <person name="Corby N."/>
            <person name="Dunn M."/>
            <person name="Johnson C."/>
            <person name="Wood J."/>
            <person name="Clark S."/>
            <person name="Pelan S."/>
            <person name="Griffiths G."/>
            <person name="Smith M."/>
            <person name="Glithero R."/>
            <person name="Howden P."/>
            <person name="Barker N."/>
            <person name="Lloyd C."/>
            <person name="Stevens C."/>
            <person name="Harley J."/>
            <person name="Holt K."/>
            <person name="Panagiotidis G."/>
            <person name="Lovell J."/>
            <person name="Beasley H."/>
            <person name="Henderson C."/>
            <person name="Gordon D."/>
            <person name="Auger K."/>
            <person name="Wright D."/>
            <person name="Collins J."/>
            <person name="Raisen C."/>
            <person name="Dyer L."/>
            <person name="Leung K."/>
            <person name="Robertson L."/>
            <person name="Ambridge K."/>
            <person name="Leongamornlert D."/>
            <person name="McGuire S."/>
            <person name="Gilderthorp R."/>
            <person name="Griffiths C."/>
            <person name="Manthravadi D."/>
            <person name="Nichol S."/>
            <person name="Barker G."/>
            <person name="Whitehead S."/>
            <person name="Kay M."/>
            <person name="Brown J."/>
            <person name="Murnane C."/>
            <person name="Gray E."/>
            <person name="Humphries M."/>
            <person name="Sycamore N."/>
            <person name="Barker D."/>
            <person name="Saunders D."/>
            <person name="Wallis J."/>
            <person name="Babbage A."/>
            <person name="Hammond S."/>
            <person name="Mashreghi-Mohammadi M."/>
            <person name="Barr L."/>
            <person name="Martin S."/>
            <person name="Wray P."/>
            <person name="Ellington A."/>
            <person name="Matthews N."/>
            <person name="Ellwood M."/>
            <person name="Woodmansey R."/>
            <person name="Clark G."/>
            <person name="Cooper J."/>
            <person name="Tromans A."/>
            <person name="Grafham D."/>
            <person name="Skuce C."/>
            <person name="Pandian R."/>
            <person name="Andrews R."/>
            <person name="Harrison E."/>
            <person name="Kimberley A."/>
            <person name="Garnett J."/>
            <person name="Fosker N."/>
            <person name="Hall R."/>
            <person name="Garner P."/>
            <person name="Kelly D."/>
            <person name="Bird C."/>
            <person name="Palmer S."/>
            <person name="Gehring I."/>
            <person name="Berger A."/>
            <person name="Dooley C.M."/>
            <person name="Ersan-Urun Z."/>
            <person name="Eser C."/>
            <person name="Geiger H."/>
            <person name="Geisler M."/>
            <person name="Karotki L."/>
            <person name="Kirn A."/>
            <person name="Konantz J."/>
            <person name="Konantz M."/>
            <person name="Oberlander M."/>
            <person name="Rudolph-Geiger S."/>
            <person name="Teucke M."/>
            <person name="Lanz C."/>
            <person name="Raddatz G."/>
            <person name="Osoegawa K."/>
            <person name="Zhu B."/>
            <person name="Rapp A."/>
            <person name="Widaa S."/>
            <person name="Langford C."/>
            <person name="Yang F."/>
            <person name="Schuster S.C."/>
            <person name="Carter N.P."/>
            <person name="Harrow J."/>
            <person name="Ning Z."/>
            <person name="Herrero J."/>
            <person name="Searle S.M."/>
            <person name="Enright A."/>
            <person name="Geisler R."/>
            <person name="Plasterk R.H."/>
            <person name="Lee C."/>
            <person name="Westerfield M."/>
            <person name="de Jong P.J."/>
            <person name="Zon L.I."/>
            <person name="Postlethwait J.H."/>
            <person name="Nusslein-Volhard C."/>
            <person name="Hubbard T.J."/>
            <person name="Roest Crollius H."/>
            <person name="Rogers J."/>
            <person name="Stemple D.L."/>
        </authorList>
    </citation>
    <scope>NUCLEOTIDE SEQUENCE [LARGE SCALE GENOMIC DNA]</scope>
    <source>
        <strain>Tuebingen</strain>
    </source>
</reference>
<reference key="2">
    <citation type="submission" date="2004-11" db="EMBL/GenBank/DDBJ databases">
        <authorList>
            <consortium name="NIH - Zebrafish Gene Collection (ZGC) project"/>
        </authorList>
    </citation>
    <scope>NUCLEOTIDE SEQUENCE [LARGE SCALE MRNA]</scope>
    <source>
        <tissue>Olfactory epithelium</tissue>
    </source>
</reference>
<organism>
    <name type="scientific">Danio rerio</name>
    <name type="common">Zebrafish</name>
    <name type="synonym">Brachydanio rerio</name>
    <dbReference type="NCBI Taxonomy" id="7955"/>
    <lineage>
        <taxon>Eukaryota</taxon>
        <taxon>Metazoa</taxon>
        <taxon>Chordata</taxon>
        <taxon>Craniata</taxon>
        <taxon>Vertebrata</taxon>
        <taxon>Euteleostomi</taxon>
        <taxon>Actinopterygii</taxon>
        <taxon>Neopterygii</taxon>
        <taxon>Teleostei</taxon>
        <taxon>Ostariophysi</taxon>
        <taxon>Cypriniformes</taxon>
        <taxon>Danionidae</taxon>
        <taxon>Danioninae</taxon>
        <taxon>Danio</taxon>
    </lineage>
</organism>
<feature type="chain" id="PRO_0000304616" description="BRO1 domain-containing protein BROX">
    <location>
        <begin position="1"/>
        <end position="408"/>
    </location>
</feature>
<feature type="propeptide" id="PRO_0000396740" description="Removed in mature form" evidence="1">
    <location>
        <begin position="409"/>
        <end position="411"/>
    </location>
</feature>
<feature type="domain" description="BRO1" evidence="2">
    <location>
        <begin position="84"/>
        <end position="403"/>
    </location>
</feature>
<feature type="region of interest" description="Disordered" evidence="3">
    <location>
        <begin position="379"/>
        <end position="411"/>
    </location>
</feature>
<feature type="compositionally biased region" description="Basic and acidic residues" evidence="3">
    <location>
        <begin position="379"/>
        <end position="404"/>
    </location>
</feature>
<feature type="modified residue" description="Cysteine methyl ester" evidence="1">
    <location>
        <position position="408"/>
    </location>
</feature>
<feature type="lipid moiety-binding region" description="S-farnesyl cysteine" evidence="1">
    <location>
        <position position="408"/>
    </location>
</feature>
<feature type="sequence conflict" description="In Ref. 2; AAH85420." evidence="4" ref="2">
    <original>L</original>
    <variation>S</variation>
    <location>
        <position position="129"/>
    </location>
</feature>
<feature type="sequence conflict" description="In Ref. 2; AAH85420." evidence="4" ref="2">
    <original>E</original>
    <variation>G</variation>
    <location>
        <position position="276"/>
    </location>
</feature>
<gene>
    <name type="primary">brox</name>
    <name type="ORF">si:ch211-14a11.3</name>
    <name type="ORF">zgc:101706</name>
</gene>
<protein>
    <recommendedName>
        <fullName>BRO1 domain-containing protein BROX</fullName>
    </recommendedName>
    <alternativeName>
        <fullName>BRO1 domain- and CAAX motif-containing protein</fullName>
    </alternativeName>
</protein>
<name>BROX_DANRE</name>